<reference key="1">
    <citation type="journal article" date="2001" name="Gen. Comp. Endocrinol.">
        <title>Overexpression of the FK506-binding immunophilin FKBP51 is the common cause of glucocorticoid resistance in three New World primates.</title>
        <authorList>
            <person name="Scammell J.G."/>
            <person name="Denny W.B."/>
            <person name="Valentine D.L."/>
            <person name="Smith D.F."/>
        </authorList>
    </citation>
    <scope>NUCLEOTIDE SEQUENCE [MRNA]</scope>
    <scope>FUNCTION</scope>
    <scope>SUBCELLULAR LOCATION</scope>
    <source>
        <tissue>B-cell</tissue>
    </source>
</reference>
<name>FKBP5_AOTNA</name>
<evidence type="ECO:0000250" key="1">
    <source>
        <dbReference type="UniProtKB" id="Q13451"/>
    </source>
</evidence>
<evidence type="ECO:0000250" key="2">
    <source>
        <dbReference type="UniProtKB" id="Q64378"/>
    </source>
</evidence>
<evidence type="ECO:0000255" key="3">
    <source>
        <dbReference type="PROSITE-ProRule" id="PRU00277"/>
    </source>
</evidence>
<evidence type="ECO:0000256" key="4">
    <source>
        <dbReference type="SAM" id="MobiDB-lite"/>
    </source>
</evidence>
<evidence type="ECO:0000269" key="5">
    <source>
    </source>
</evidence>
<comment type="function">
    <text evidence="1 5">Immunophilin protein with PPIase and co-chaperone activities. Component of unligated steroid receptors heterocomplexes through interaction with heat-shock protein 90 (HSP90). Plays a role in the intracellular trafficking of heterooligomeric forms of steroid hormone receptors maintaining the complex into the cytoplasm when unliganded (PubMed:11703081). Acts as a regulator of Akt/AKT1 activity by promoting the interaction between Akt/AKT1 and PHLPP1, thereby enhancing dephosphorylation and subsequent activation of Akt/AKT1. Interacts with IKBKE and IKBKB which facilitates IKK complex assembly leading to increased IKBKE and IKBKB kinase activity, NF-kappaB activation, and IFN production.</text>
</comment>
<comment type="catalytic activity">
    <reaction evidence="1">
        <text>[protein]-peptidylproline (omega=180) = [protein]-peptidylproline (omega=0)</text>
        <dbReference type="Rhea" id="RHEA:16237"/>
        <dbReference type="Rhea" id="RHEA-COMP:10747"/>
        <dbReference type="Rhea" id="RHEA-COMP:10748"/>
        <dbReference type="ChEBI" id="CHEBI:83833"/>
        <dbReference type="ChEBI" id="CHEBI:83834"/>
        <dbReference type="EC" id="5.2.1.8"/>
    </reaction>
</comment>
<comment type="activity regulation">
    <text evidence="2">Inhibited by both FK506 and rapamycin.</text>
</comment>
<comment type="subunit">
    <text evidence="1 2">Part of a heteromultimeric cytoplasmic complex with HSP90AA1, HSPA1A/HSPA1B and steroid receptors. Upon ligand binding dissociates from the complex and FKBP4 takes its place (By similarity). Interacts with functionally mature heterooligomeric progesterone receptor complexes along with HSP90 and TEBP (By similarity). Interacts with NR3C1 (By similarity). Interacts with Akt/AKT1 and PHLPP1; enhancing dephosphorylation and subsequent activation of Akt/AKT1 (By similarity). Interacts with IFI44L; this interaction modulates the kinase activity of IKBKB and IKBKE (By similarity). Interacts with IKBKB and IKBKE (By similarity).</text>
</comment>
<comment type="subcellular location">
    <subcellularLocation>
        <location evidence="5">Cytoplasm</location>
    </subcellularLocation>
    <subcellularLocation>
        <location evidence="2">Nucleus</location>
    </subcellularLocation>
</comment>
<comment type="PTM">
    <text evidence="1">Acetylation impairs ability to promote interaction between Akt/AKT1 and PHLPP1. Deacetylation by SIRT7 promotes interaction between Akt/AKT1 and PHLPP1, leading to suppress Akt/AKT1 activation.</text>
</comment>
<comment type="PTM">
    <text evidence="1">Ubiquitinated, leading to degradation in a proteasome-dependent manner. Deubiquitinated by USP49, leading to stabilization.</text>
</comment>
<comment type="miscellaneous">
    <text evidence="5">The relative resistance of New World monkeys to glucocorticoids is associated with a high level of expression of FKBP5, but is also due to intrinsic differences between the human and the monkey proteins. Human FKBP5 has a much lower effect on glucocorticoid sensitivity.</text>
</comment>
<protein>
    <recommendedName>
        <fullName>Peptidyl-prolyl cis-trans isomerase FKBP5</fullName>
        <shortName>PPIase FKBP5</shortName>
        <ecNumber evidence="1">5.2.1.8</ecNumber>
    </recommendedName>
    <alternativeName>
        <fullName>51 kDa FK506-binding protein</fullName>
        <shortName>51 kDa FKBP</shortName>
        <shortName>FKBP-51</shortName>
    </alternativeName>
    <alternativeName>
        <fullName>FK506-binding protein 5</fullName>
        <shortName>FKBP-5</shortName>
    </alternativeName>
    <alternativeName>
        <fullName>Rotamase</fullName>
    </alternativeName>
</protein>
<organism>
    <name type="scientific">Aotus nancymaae</name>
    <name type="common">Ma's night monkey</name>
    <dbReference type="NCBI Taxonomy" id="37293"/>
    <lineage>
        <taxon>Eukaryota</taxon>
        <taxon>Metazoa</taxon>
        <taxon>Chordata</taxon>
        <taxon>Craniata</taxon>
        <taxon>Vertebrata</taxon>
        <taxon>Euteleostomi</taxon>
        <taxon>Mammalia</taxon>
        <taxon>Eutheria</taxon>
        <taxon>Euarchontoglires</taxon>
        <taxon>Primates</taxon>
        <taxon>Haplorrhini</taxon>
        <taxon>Platyrrhini</taxon>
        <taxon>Aotidae</taxon>
        <taxon>Aotus</taxon>
    </lineage>
</organism>
<keyword id="KW-0007">Acetylation</keyword>
<keyword id="KW-0143">Chaperone</keyword>
<keyword id="KW-0963">Cytoplasm</keyword>
<keyword id="KW-0413">Isomerase</keyword>
<keyword id="KW-0539">Nucleus</keyword>
<keyword id="KW-0597">Phosphoprotein</keyword>
<keyword id="KW-1185">Reference proteome</keyword>
<keyword id="KW-0677">Repeat</keyword>
<keyword id="KW-0697">Rotamase</keyword>
<keyword id="KW-0802">TPR repeat</keyword>
<keyword id="KW-0832">Ubl conjugation</keyword>
<dbReference type="EC" id="5.2.1.8" evidence="1"/>
<dbReference type="EMBL" id="AF141937">
    <property type="protein sequence ID" value="AAD33882.2"/>
    <property type="molecule type" value="mRNA"/>
</dbReference>
<dbReference type="RefSeq" id="NP_001295455.1">
    <property type="nucleotide sequence ID" value="NM_001308526.1"/>
</dbReference>
<dbReference type="RefSeq" id="XP_012317022.1">
    <property type="nucleotide sequence ID" value="XM_012461599.1"/>
</dbReference>
<dbReference type="RefSeq" id="XP_012317023.1">
    <property type="nucleotide sequence ID" value="XM_012461600.1"/>
</dbReference>
<dbReference type="RefSeq" id="XP_012317024.1">
    <property type="nucleotide sequence ID" value="XM_012461601.2"/>
</dbReference>
<dbReference type="RefSeq" id="XP_012317025.1">
    <property type="nucleotide sequence ID" value="XM_012461602.1"/>
</dbReference>
<dbReference type="RefSeq" id="XP_012317027.1">
    <property type="nucleotide sequence ID" value="XM_012461604.1"/>
</dbReference>
<dbReference type="SMR" id="Q9XT11"/>
<dbReference type="STRING" id="37293.ENSANAP00000025082"/>
<dbReference type="Ensembl" id="ENSANAT00000043003.1">
    <property type="protein sequence ID" value="ENSANAP00000025082.1"/>
    <property type="gene ID" value="ENSANAG00000030235.1"/>
</dbReference>
<dbReference type="GeneID" id="105723520"/>
<dbReference type="KEGG" id="anan:105723520"/>
<dbReference type="CTD" id="2289"/>
<dbReference type="GeneTree" id="ENSGT00940000158726"/>
<dbReference type="OMA" id="QAILTIH"/>
<dbReference type="OrthoDB" id="433738at2759"/>
<dbReference type="Proteomes" id="UP000233020">
    <property type="component" value="Unplaced"/>
</dbReference>
<dbReference type="GO" id="GO:0005829">
    <property type="term" value="C:cytosol"/>
    <property type="evidence" value="ECO:0007669"/>
    <property type="project" value="Ensembl"/>
</dbReference>
<dbReference type="GO" id="GO:0005654">
    <property type="term" value="C:nucleoplasm"/>
    <property type="evidence" value="ECO:0007669"/>
    <property type="project" value="Ensembl"/>
</dbReference>
<dbReference type="GO" id="GO:0031072">
    <property type="term" value="F:heat shock protein binding"/>
    <property type="evidence" value="ECO:0007669"/>
    <property type="project" value="Ensembl"/>
</dbReference>
<dbReference type="GO" id="GO:0003755">
    <property type="term" value="F:peptidyl-prolyl cis-trans isomerase activity"/>
    <property type="evidence" value="ECO:0000250"/>
    <property type="project" value="UniProtKB"/>
</dbReference>
<dbReference type="GO" id="GO:0030674">
    <property type="term" value="F:protein-macromolecule adaptor activity"/>
    <property type="evidence" value="ECO:0007669"/>
    <property type="project" value="Ensembl"/>
</dbReference>
<dbReference type="GO" id="GO:0061077">
    <property type="term" value="P:chaperone-mediated protein folding"/>
    <property type="evidence" value="ECO:0000250"/>
    <property type="project" value="UniProtKB"/>
</dbReference>
<dbReference type="GO" id="GO:0009617">
    <property type="term" value="P:response to bacterium"/>
    <property type="evidence" value="ECO:0007669"/>
    <property type="project" value="Ensembl"/>
</dbReference>
<dbReference type="FunFam" id="1.25.40.10:FF:000008">
    <property type="entry name" value="Peptidylprolyl isomerase"/>
    <property type="match status" value="1"/>
</dbReference>
<dbReference type="FunFam" id="3.10.50.40:FF:000011">
    <property type="entry name" value="Peptidylprolyl isomerase"/>
    <property type="match status" value="1"/>
</dbReference>
<dbReference type="FunFam" id="3.10.50.40:FF:000013">
    <property type="entry name" value="Peptidylprolyl isomerase"/>
    <property type="match status" value="1"/>
</dbReference>
<dbReference type="Gene3D" id="3.10.50.40">
    <property type="match status" value="2"/>
</dbReference>
<dbReference type="Gene3D" id="1.25.40.10">
    <property type="entry name" value="Tetratricopeptide repeat domain"/>
    <property type="match status" value="1"/>
</dbReference>
<dbReference type="InterPro" id="IPR050754">
    <property type="entry name" value="FKBP4/5/8-like"/>
</dbReference>
<dbReference type="InterPro" id="IPR046357">
    <property type="entry name" value="PPIase_dom_sf"/>
</dbReference>
<dbReference type="InterPro" id="IPR001179">
    <property type="entry name" value="PPIase_FKBP_dom"/>
</dbReference>
<dbReference type="InterPro" id="IPR011990">
    <property type="entry name" value="TPR-like_helical_dom_sf"/>
</dbReference>
<dbReference type="InterPro" id="IPR019734">
    <property type="entry name" value="TPR_rpt"/>
</dbReference>
<dbReference type="PANTHER" id="PTHR46512">
    <property type="entry name" value="PEPTIDYLPROLYL ISOMERASE"/>
    <property type="match status" value="1"/>
</dbReference>
<dbReference type="PANTHER" id="PTHR46512:SF9">
    <property type="entry name" value="PEPTIDYLPROLYL ISOMERASE"/>
    <property type="match status" value="1"/>
</dbReference>
<dbReference type="Pfam" id="PF00254">
    <property type="entry name" value="FKBP_C"/>
    <property type="match status" value="2"/>
</dbReference>
<dbReference type="Pfam" id="PF00515">
    <property type="entry name" value="TPR_1"/>
    <property type="match status" value="1"/>
</dbReference>
<dbReference type="Pfam" id="PF13181">
    <property type="entry name" value="TPR_8"/>
    <property type="match status" value="1"/>
</dbReference>
<dbReference type="SMART" id="SM00028">
    <property type="entry name" value="TPR"/>
    <property type="match status" value="3"/>
</dbReference>
<dbReference type="SUPFAM" id="SSF54534">
    <property type="entry name" value="FKBP-like"/>
    <property type="match status" value="2"/>
</dbReference>
<dbReference type="SUPFAM" id="SSF48452">
    <property type="entry name" value="TPR-like"/>
    <property type="match status" value="1"/>
</dbReference>
<dbReference type="PROSITE" id="PS50059">
    <property type="entry name" value="FKBP_PPIASE"/>
    <property type="match status" value="2"/>
</dbReference>
<dbReference type="PROSITE" id="PS50005">
    <property type="entry name" value="TPR"/>
    <property type="match status" value="3"/>
</dbReference>
<dbReference type="PROSITE" id="PS50293">
    <property type="entry name" value="TPR_REGION"/>
    <property type="match status" value="1"/>
</dbReference>
<accession>Q9XT11</accession>
<sequence>MTTDEGAKNSRENPTATVAEQGEDVTSKKDRGVLKIVKRVGHGEETPMIGDKVYVHYNGKLSNGKKFDSSHDRNEPFVFSIGKGQVIKAWDIGVATMKKGEICHLLCKPEYAYGATGSLPKIPSNATLFFEIELLDFKGEDLLEDGGIIRRTKRRGEGYSNPNEGARVQIHLEGRCGGRVFDCRDVAFTVGEGEDHDIPIGIDKALEKMQREEQCILHLGPRYGFGEAGKPKFGIEPNAELIYEVTLKSFEKAKESWEMDTKEKLEQAAIVKEKGTLYFKGGKYVQAVIQYGKIVSWLEMEYGLSEKESKASESFLLAAFLNLAMCYLKLREYTKAVECCDKALGLDSANEKGLYRRGEAQLLMNEFESAKGDFEKVLEVNPQNKAARLQIFMCQKKAKEHNERDRRIYANMFKKFAEQDAKEEANKAMSKKTSEGVTNEKLAVSHAVEEEKPEGHV</sequence>
<gene>
    <name type="primary">FKBP5</name>
    <name type="synonym">FKBP51</name>
</gene>
<feature type="chain" id="PRO_0000075322" description="Peptidyl-prolyl cis-trans isomerase FKBP5">
    <location>
        <begin position="1"/>
        <end position="457"/>
    </location>
</feature>
<feature type="domain" description="PPIase FKBP-type 1" evidence="3">
    <location>
        <begin position="50"/>
        <end position="138"/>
    </location>
</feature>
<feature type="domain" description="PPIase FKBP-type 2" evidence="3">
    <location>
        <begin position="165"/>
        <end position="251"/>
    </location>
</feature>
<feature type="repeat" description="TPR 1">
    <location>
        <begin position="268"/>
        <end position="301"/>
    </location>
</feature>
<feature type="repeat" description="TPR 2">
    <location>
        <begin position="317"/>
        <end position="350"/>
    </location>
</feature>
<feature type="repeat" description="TPR 3">
    <location>
        <begin position="351"/>
        <end position="384"/>
    </location>
</feature>
<feature type="region of interest" description="Disordered" evidence="4">
    <location>
        <begin position="1"/>
        <end position="27"/>
    </location>
</feature>
<feature type="region of interest" description="Disordered" evidence="4">
    <location>
        <begin position="423"/>
        <end position="457"/>
    </location>
</feature>
<feature type="compositionally biased region" description="Basic and acidic residues" evidence="4">
    <location>
        <begin position="1"/>
        <end position="11"/>
    </location>
</feature>
<feature type="compositionally biased region" description="Basic and acidic residues" evidence="4">
    <location>
        <begin position="447"/>
        <end position="457"/>
    </location>
</feature>
<feature type="modified residue" description="N-acetylmethionine" evidence="1">
    <location>
        <position position="1"/>
    </location>
</feature>
<feature type="modified residue" description="N6-acetyllysine" evidence="1">
    <location>
        <position position="28"/>
    </location>
</feature>
<feature type="modified residue" description="Phosphoserine" evidence="1">
    <location>
        <position position="445"/>
    </location>
</feature>
<proteinExistence type="evidence at transcript level"/>